<name>RECD_MYCTU</name>
<feature type="chain" id="PRO_0000390680" description="RecBCD enzyme subunit RecD">
    <location>
        <begin position="1"/>
        <end position="575"/>
    </location>
</feature>
<feature type="binding site" evidence="2">
    <location>
        <begin position="170"/>
        <end position="177"/>
    </location>
    <ligand>
        <name>ATP</name>
        <dbReference type="ChEBI" id="CHEBI:30616"/>
    </ligand>
</feature>
<organism>
    <name type="scientific">Mycobacterium tuberculosis (strain ATCC 25618 / H37Rv)</name>
    <dbReference type="NCBI Taxonomy" id="83332"/>
    <lineage>
        <taxon>Bacteria</taxon>
        <taxon>Bacillati</taxon>
        <taxon>Actinomycetota</taxon>
        <taxon>Actinomycetes</taxon>
        <taxon>Mycobacteriales</taxon>
        <taxon>Mycobacteriaceae</taxon>
        <taxon>Mycobacterium</taxon>
        <taxon>Mycobacterium tuberculosis complex</taxon>
    </lineage>
</organism>
<keyword id="KW-0067">ATP-binding</keyword>
<keyword id="KW-0227">DNA damage</keyword>
<keyword id="KW-0234">DNA repair</keyword>
<keyword id="KW-0238">DNA-binding</keyword>
<keyword id="KW-0269">Exonuclease</keyword>
<keyword id="KW-0347">Helicase</keyword>
<keyword id="KW-0378">Hydrolase</keyword>
<keyword id="KW-0413">Isomerase</keyword>
<keyword id="KW-0540">Nuclease</keyword>
<keyword id="KW-0547">Nucleotide-binding</keyword>
<keyword id="KW-1185">Reference proteome</keyword>
<evidence type="ECO:0000250" key="1">
    <source>
        <dbReference type="UniProtKB" id="A0QS28"/>
    </source>
</evidence>
<evidence type="ECO:0000255" key="2">
    <source>
        <dbReference type="HAMAP-Rule" id="MF_01487"/>
    </source>
</evidence>
<evidence type="ECO:0000269" key="3">
    <source>
    </source>
</evidence>
<protein>
    <recommendedName>
        <fullName evidence="2">RecBCD enzyme subunit RecD</fullName>
        <ecNumber evidence="2">5.6.2.3</ecNumber>
    </recommendedName>
    <alternativeName>
        <fullName evidence="2">DNA 5'-3' helicase subunit RecB</fullName>
    </alternativeName>
    <alternativeName>
        <fullName evidence="2">Exonuclease V subunit RecD</fullName>
        <shortName evidence="2">ExoV subunit RecD</shortName>
    </alternativeName>
    <alternativeName>
        <fullName evidence="2">Helicase/nuclease RecBCD subunit RecD</fullName>
    </alternativeName>
</protein>
<dbReference type="EC" id="5.6.2.3" evidence="2"/>
<dbReference type="EMBL" id="AL123456">
    <property type="protein sequence ID" value="CCP43370.1"/>
    <property type="molecule type" value="Genomic_DNA"/>
</dbReference>
<dbReference type="PIR" id="B70612">
    <property type="entry name" value="B70612"/>
</dbReference>
<dbReference type="RefSeq" id="NP_215143.1">
    <property type="nucleotide sequence ID" value="NC_000962.3"/>
</dbReference>
<dbReference type="RefSeq" id="WP_003900979.1">
    <property type="nucleotide sequence ID" value="NZ_NVQJ01000033.1"/>
</dbReference>
<dbReference type="SMR" id="P9WHJ1"/>
<dbReference type="FunCoup" id="P9WHJ1">
    <property type="interactions" value="11"/>
</dbReference>
<dbReference type="STRING" id="83332.Rv0629c"/>
<dbReference type="PaxDb" id="83332-Rv0629c"/>
<dbReference type="DNASU" id="887999"/>
<dbReference type="GeneID" id="887999"/>
<dbReference type="KEGG" id="mtu:Rv0629c"/>
<dbReference type="KEGG" id="mtv:RVBD_0629c"/>
<dbReference type="TubercuList" id="Rv0629c"/>
<dbReference type="eggNOG" id="COG0507">
    <property type="taxonomic scope" value="Bacteria"/>
</dbReference>
<dbReference type="InParanoid" id="P9WHJ1"/>
<dbReference type="OrthoDB" id="9763659at2"/>
<dbReference type="PhylomeDB" id="P9WHJ1"/>
<dbReference type="Proteomes" id="UP000001584">
    <property type="component" value="Chromosome"/>
</dbReference>
<dbReference type="GO" id="GO:0005829">
    <property type="term" value="C:cytosol"/>
    <property type="evidence" value="ECO:0007005"/>
    <property type="project" value="MTBBASE"/>
</dbReference>
<dbReference type="GO" id="GO:0009338">
    <property type="term" value="C:exodeoxyribonuclease V complex"/>
    <property type="evidence" value="ECO:0000318"/>
    <property type="project" value="GO_Central"/>
</dbReference>
<dbReference type="GO" id="GO:0009274">
    <property type="term" value="C:peptidoglycan-based cell wall"/>
    <property type="evidence" value="ECO:0007005"/>
    <property type="project" value="MTBBASE"/>
</dbReference>
<dbReference type="GO" id="GO:0005886">
    <property type="term" value="C:plasma membrane"/>
    <property type="evidence" value="ECO:0007005"/>
    <property type="project" value="MTBBASE"/>
</dbReference>
<dbReference type="GO" id="GO:0043139">
    <property type="term" value="F:5'-3' DNA helicase activity"/>
    <property type="evidence" value="ECO:0007669"/>
    <property type="project" value="UniProtKB-UniRule"/>
</dbReference>
<dbReference type="GO" id="GO:0005524">
    <property type="term" value="F:ATP binding"/>
    <property type="evidence" value="ECO:0007669"/>
    <property type="project" value="UniProtKB-UniRule"/>
</dbReference>
<dbReference type="GO" id="GO:0016887">
    <property type="term" value="F:ATP hydrolysis activity"/>
    <property type="evidence" value="ECO:0007669"/>
    <property type="project" value="RHEA"/>
</dbReference>
<dbReference type="GO" id="GO:0003677">
    <property type="term" value="F:DNA binding"/>
    <property type="evidence" value="ECO:0007669"/>
    <property type="project" value="UniProtKB-UniRule"/>
</dbReference>
<dbReference type="GO" id="GO:0008854">
    <property type="term" value="F:exodeoxyribonuclease V activity"/>
    <property type="evidence" value="ECO:0007669"/>
    <property type="project" value="UniProtKB-EC"/>
</dbReference>
<dbReference type="GO" id="GO:0017116">
    <property type="term" value="F:single-stranded DNA helicase activity"/>
    <property type="evidence" value="ECO:0000318"/>
    <property type="project" value="GO_Central"/>
</dbReference>
<dbReference type="GO" id="GO:0006310">
    <property type="term" value="P:DNA recombination"/>
    <property type="evidence" value="ECO:0000318"/>
    <property type="project" value="GO_Central"/>
</dbReference>
<dbReference type="GO" id="GO:0000724">
    <property type="term" value="P:double-strand break repair via homologous recombination"/>
    <property type="evidence" value="ECO:0007669"/>
    <property type="project" value="UniProtKB-UniRule"/>
</dbReference>
<dbReference type="CDD" id="cd17933">
    <property type="entry name" value="DEXSc_RecD-like"/>
    <property type="match status" value="1"/>
</dbReference>
<dbReference type="CDD" id="cd18809">
    <property type="entry name" value="SF1_C_RecD"/>
    <property type="match status" value="1"/>
</dbReference>
<dbReference type="FunFam" id="3.40.50.300:FF:002987">
    <property type="entry name" value="RecBCD enzyme subunit RecD"/>
    <property type="match status" value="1"/>
</dbReference>
<dbReference type="Gene3D" id="3.40.50.300">
    <property type="entry name" value="P-loop containing nucleotide triphosphate hydrolases"/>
    <property type="match status" value="3"/>
</dbReference>
<dbReference type="Gene3D" id="1.10.10.1020">
    <property type="entry name" value="RecBCD complex, subunit RecD, N-terminal domain"/>
    <property type="match status" value="1"/>
</dbReference>
<dbReference type="HAMAP" id="MF_01487">
    <property type="entry name" value="RecD"/>
    <property type="match status" value="1"/>
</dbReference>
<dbReference type="InterPro" id="IPR050534">
    <property type="entry name" value="Coronavir_polyprotein_1ab"/>
</dbReference>
<dbReference type="InterPro" id="IPR027417">
    <property type="entry name" value="P-loop_NTPase"/>
</dbReference>
<dbReference type="InterPro" id="IPR006344">
    <property type="entry name" value="RecD"/>
</dbReference>
<dbReference type="InterPro" id="IPR049550">
    <property type="entry name" value="RecD_N"/>
</dbReference>
<dbReference type="InterPro" id="IPR041851">
    <property type="entry name" value="RecD_N_sf"/>
</dbReference>
<dbReference type="InterPro" id="IPR027785">
    <property type="entry name" value="UvrD-like_helicase_C"/>
</dbReference>
<dbReference type="NCBIfam" id="TIGR01447">
    <property type="entry name" value="recD"/>
    <property type="match status" value="1"/>
</dbReference>
<dbReference type="PANTHER" id="PTHR43788:SF6">
    <property type="entry name" value="DNA HELICASE B"/>
    <property type="match status" value="1"/>
</dbReference>
<dbReference type="PANTHER" id="PTHR43788">
    <property type="entry name" value="DNA2/NAM7 HELICASE FAMILY MEMBER"/>
    <property type="match status" value="1"/>
</dbReference>
<dbReference type="Pfam" id="PF13245">
    <property type="entry name" value="AAA_19"/>
    <property type="match status" value="1"/>
</dbReference>
<dbReference type="Pfam" id="PF21185">
    <property type="entry name" value="RecD_N"/>
    <property type="match status" value="1"/>
</dbReference>
<dbReference type="Pfam" id="PF13538">
    <property type="entry name" value="UvrD_C_2"/>
    <property type="match status" value="1"/>
</dbReference>
<dbReference type="SUPFAM" id="SSF52540">
    <property type="entry name" value="P-loop containing nucleoside triphosphate hydrolases"/>
    <property type="match status" value="2"/>
</dbReference>
<gene>
    <name evidence="2" type="primary">recD</name>
    <name type="ordered locus">Rv0629c</name>
</gene>
<comment type="function">
    <text evidence="1">A helicase/nuclease that prepares dsDNA breaks (DSB) for recombinational DNA repair. Binds to DSBs and unwinds DNA via a highly rapid and processive ATP-dependent bidirectional helicase activity. Holoenzyme degrades any linearized DNA that is unable to undergo homologous recombination. In the holoenzyme this subunit has ssDNA-dependent ATPase and 5'-3' helicase activity. When added to pre-assembled RecBC greatly stimulates nuclease activity and augments holoenzyme processivity. Unlike the case in E.coli, suppresses RecA-dependent homologous recombination, is instead required for single-strand annealing pathway repair of DSB.</text>
</comment>
<comment type="function">
    <text evidence="2">A helicase/nuclease that prepares dsDNA breaks (DSB) for recombinational DNA repair. Binds to DSBs and unwinds DNA via a highly rapid and processive ATP-dependent bidirectional helicase activity. Unwinds dsDNA until it encounters a Chi (crossover hotspot instigator) sequence from the 3' direction. Cuts ssDNA a few nucleotides 3' to the Chi site. The properties and activities of the enzyme are changed at Chi. The Chi-altered holoenzyme produces a long 3'-ssDNA overhang and facilitates RecA-binding to the ssDNA for homologous DNA recombination and repair. Holoenzyme degrades any linearized DNA that is unable to undergo homologous recombination. In the holoenzyme this subunit has ssDNA-dependent ATPase and 5'-3' helicase activity. When added to pre-assembled RecBC greatly stimulates nuclease activity and augments holoenzyme processivity. Negatively regulates the RecA-loading ability of RecBCD.</text>
</comment>
<comment type="catalytic activity">
    <reaction evidence="2">
        <text>Couples ATP hydrolysis with the unwinding of duplex DNA at the replication fork by translocating in the 5'-3' direction. This creates two antiparallel DNA single strands (ssDNA). The leading ssDNA polymer is the template for DNA polymerase III holoenzyme which synthesizes a continuous strand.</text>
        <dbReference type="EC" id="5.6.2.3"/>
    </reaction>
</comment>
<comment type="catalytic activity">
    <reaction evidence="2">
        <text>ATP + H2O = ADP + phosphate + H(+)</text>
        <dbReference type="Rhea" id="RHEA:13065"/>
        <dbReference type="ChEBI" id="CHEBI:15377"/>
        <dbReference type="ChEBI" id="CHEBI:15378"/>
        <dbReference type="ChEBI" id="CHEBI:30616"/>
        <dbReference type="ChEBI" id="CHEBI:43474"/>
        <dbReference type="ChEBI" id="CHEBI:456216"/>
        <dbReference type="EC" id="5.6.2.3"/>
    </reaction>
</comment>
<comment type="subunit">
    <text evidence="2">Heterotrimer of RecB, RecC and RecD. All subunits contribute to DNA-binding.</text>
</comment>
<comment type="disruption phenotype">
    <text evidence="3">Not essential for growth.</text>
</comment>
<comment type="miscellaneous">
    <text evidence="2">In the RecBCD complex, RecB has a slow 3'-5' helicase, an exonuclease activity and loads RecA onto ssDNA, RecD has a fast 5'-3' helicase activity, while RecC stimulates the ATPase and processivity of the RecB helicase and contributes to recognition of the Chi site.</text>
</comment>
<comment type="similarity">
    <text evidence="2">Belongs to the RecD family.</text>
</comment>
<accession>P9WHJ1</accession>
<accession>L0T4A3</accession>
<accession>P96919</accession>
<accession>Q7D9I4</accession>
<sequence length="575" mass="61747">MKLTDVDFAVEASGMVRAFNQAGVLDVSDVHVAQRLCALAGESDERVALAVAVAVRALRAGSVCVDLLSIARVAGHDDLPWPDPADWLAAVRASPLLADPPVLHLYDDRLLYLDRYWREEEQVCADLLALLTSRRPAGVPDLRRLFPTGFDEQRRAAEIALSQGVTVLTGGPGTGKTTTVARLLALVAEQAELAGEPRPRIALAAPTGKAAARLAEAVRREMAKLDATDRARLGDLHAVTLHRLLGAKPGARFRQDRQNRLPHNVIVVDETSMVSLTLMARLAEAVRPGARLILVGDADQLASVEAGAVLADLVDGFSVRDDALVAQLRTSHRFGKVIGTLAEAIRAGDGDAVLGLLRSGEERIEFVDDEDPAPRLRAVLVPHALRLREAALLGASDVALATLDEHRLLCAHRDGPTGVLHWNRRVQAWLAEETGQPPWTPWYAGRPLLVTANDYGLRVYNGDTGVVLAGPTGLRAVISGASGPLDVATGRLGDVETMHAMTIHKSQGSQVDEVTVLMPQEDSRLLTRELLYTAVTRAKRKVRVVGSEASVRAAIARRAVRASGLRMRLQSTGCG</sequence>
<proteinExistence type="evidence at protein level"/>
<reference key="1">
    <citation type="journal article" date="1998" name="Nature">
        <title>Deciphering the biology of Mycobacterium tuberculosis from the complete genome sequence.</title>
        <authorList>
            <person name="Cole S.T."/>
            <person name="Brosch R."/>
            <person name="Parkhill J."/>
            <person name="Garnier T."/>
            <person name="Churcher C.M."/>
            <person name="Harris D.E."/>
            <person name="Gordon S.V."/>
            <person name="Eiglmeier K."/>
            <person name="Gas S."/>
            <person name="Barry C.E. III"/>
            <person name="Tekaia F."/>
            <person name="Badcock K."/>
            <person name="Basham D."/>
            <person name="Brown D."/>
            <person name="Chillingworth T."/>
            <person name="Connor R."/>
            <person name="Davies R.M."/>
            <person name="Devlin K."/>
            <person name="Feltwell T."/>
            <person name="Gentles S."/>
            <person name="Hamlin N."/>
            <person name="Holroyd S."/>
            <person name="Hornsby T."/>
            <person name="Jagels K."/>
            <person name="Krogh A."/>
            <person name="McLean J."/>
            <person name="Moule S."/>
            <person name="Murphy L.D."/>
            <person name="Oliver S."/>
            <person name="Osborne J."/>
            <person name="Quail M.A."/>
            <person name="Rajandream M.A."/>
            <person name="Rogers J."/>
            <person name="Rutter S."/>
            <person name="Seeger K."/>
            <person name="Skelton S."/>
            <person name="Squares S."/>
            <person name="Squares R."/>
            <person name="Sulston J.E."/>
            <person name="Taylor K."/>
            <person name="Whitehead S."/>
            <person name="Barrell B.G."/>
        </authorList>
    </citation>
    <scope>NUCLEOTIDE SEQUENCE [LARGE SCALE GENOMIC DNA]</scope>
    <source>
        <strain>ATCC 25618 / H37Rv</strain>
    </source>
</reference>
<reference key="2">
    <citation type="journal article" date="2003" name="Mol. Microbiol.">
        <title>Genes required for mycobacterial growth defined by high density mutagenesis.</title>
        <authorList>
            <person name="Sassetti C.M."/>
            <person name="Boyd D.H."/>
            <person name="Rubin E.J."/>
        </authorList>
    </citation>
    <scope>DISRUPTION PHENOTYPE</scope>
    <source>
        <strain>ATCC 25618 / H37Rv</strain>
    </source>
</reference>
<reference key="3">
    <citation type="journal article" date="2011" name="Mol. Cell. Proteomics">
        <title>Proteogenomic analysis of Mycobacterium tuberculosis by high resolution mass spectrometry.</title>
        <authorList>
            <person name="Kelkar D.S."/>
            <person name="Kumar D."/>
            <person name="Kumar P."/>
            <person name="Balakrishnan L."/>
            <person name="Muthusamy B."/>
            <person name="Yadav A.K."/>
            <person name="Shrivastava P."/>
            <person name="Marimuthu A."/>
            <person name="Anand S."/>
            <person name="Sundaram H."/>
            <person name="Kingsbury R."/>
            <person name="Harsha H.C."/>
            <person name="Nair B."/>
            <person name="Prasad T.S."/>
            <person name="Chauhan D.S."/>
            <person name="Katoch K."/>
            <person name="Katoch V.M."/>
            <person name="Kumar P."/>
            <person name="Chaerkady R."/>
            <person name="Ramachandran S."/>
            <person name="Dash D."/>
            <person name="Pandey A."/>
        </authorList>
    </citation>
    <scope>IDENTIFICATION BY MASS SPECTROMETRY [LARGE SCALE ANALYSIS]</scope>
    <source>
        <strain>ATCC 25618 / H37Rv</strain>
    </source>
</reference>